<organism>
    <name type="scientific">Burkholderia ambifaria (strain MC40-6)</name>
    <dbReference type="NCBI Taxonomy" id="398577"/>
    <lineage>
        <taxon>Bacteria</taxon>
        <taxon>Pseudomonadati</taxon>
        <taxon>Pseudomonadota</taxon>
        <taxon>Betaproteobacteria</taxon>
        <taxon>Burkholderiales</taxon>
        <taxon>Burkholderiaceae</taxon>
        <taxon>Burkholderia</taxon>
        <taxon>Burkholderia cepacia complex</taxon>
    </lineage>
</organism>
<name>NDK_BURA4</name>
<accession>B1YR47</accession>
<keyword id="KW-0067">ATP-binding</keyword>
<keyword id="KW-0963">Cytoplasm</keyword>
<keyword id="KW-0418">Kinase</keyword>
<keyword id="KW-0460">Magnesium</keyword>
<keyword id="KW-0479">Metal-binding</keyword>
<keyword id="KW-0546">Nucleotide metabolism</keyword>
<keyword id="KW-0547">Nucleotide-binding</keyword>
<keyword id="KW-0597">Phosphoprotein</keyword>
<keyword id="KW-0808">Transferase</keyword>
<evidence type="ECO:0000255" key="1">
    <source>
        <dbReference type="HAMAP-Rule" id="MF_00451"/>
    </source>
</evidence>
<gene>
    <name evidence="1" type="primary">ndk</name>
    <name type="ordered locus">BamMC406_1726</name>
</gene>
<feature type="chain" id="PRO_1000124936" description="Nucleoside diphosphate kinase">
    <location>
        <begin position="1"/>
        <end position="141"/>
    </location>
</feature>
<feature type="active site" description="Pros-phosphohistidine intermediate" evidence="1">
    <location>
        <position position="117"/>
    </location>
</feature>
<feature type="binding site" evidence="1">
    <location>
        <position position="11"/>
    </location>
    <ligand>
        <name>ATP</name>
        <dbReference type="ChEBI" id="CHEBI:30616"/>
    </ligand>
</feature>
<feature type="binding site" evidence="1">
    <location>
        <position position="59"/>
    </location>
    <ligand>
        <name>ATP</name>
        <dbReference type="ChEBI" id="CHEBI:30616"/>
    </ligand>
</feature>
<feature type="binding site" evidence="1">
    <location>
        <position position="87"/>
    </location>
    <ligand>
        <name>ATP</name>
        <dbReference type="ChEBI" id="CHEBI:30616"/>
    </ligand>
</feature>
<feature type="binding site" evidence="1">
    <location>
        <position position="93"/>
    </location>
    <ligand>
        <name>ATP</name>
        <dbReference type="ChEBI" id="CHEBI:30616"/>
    </ligand>
</feature>
<feature type="binding site" evidence="1">
    <location>
        <position position="104"/>
    </location>
    <ligand>
        <name>ATP</name>
        <dbReference type="ChEBI" id="CHEBI:30616"/>
    </ligand>
</feature>
<feature type="binding site" evidence="1">
    <location>
        <position position="114"/>
    </location>
    <ligand>
        <name>ATP</name>
        <dbReference type="ChEBI" id="CHEBI:30616"/>
    </ligand>
</feature>
<comment type="function">
    <text evidence="1">Major role in the synthesis of nucleoside triphosphates other than ATP. The ATP gamma phosphate is transferred to the NDP beta phosphate via a ping-pong mechanism, using a phosphorylated active-site intermediate.</text>
</comment>
<comment type="catalytic activity">
    <reaction evidence="1">
        <text>a 2'-deoxyribonucleoside 5'-diphosphate + ATP = a 2'-deoxyribonucleoside 5'-triphosphate + ADP</text>
        <dbReference type="Rhea" id="RHEA:44640"/>
        <dbReference type="ChEBI" id="CHEBI:30616"/>
        <dbReference type="ChEBI" id="CHEBI:61560"/>
        <dbReference type="ChEBI" id="CHEBI:73316"/>
        <dbReference type="ChEBI" id="CHEBI:456216"/>
        <dbReference type="EC" id="2.7.4.6"/>
    </reaction>
</comment>
<comment type="catalytic activity">
    <reaction evidence="1">
        <text>a ribonucleoside 5'-diphosphate + ATP = a ribonucleoside 5'-triphosphate + ADP</text>
        <dbReference type="Rhea" id="RHEA:18113"/>
        <dbReference type="ChEBI" id="CHEBI:30616"/>
        <dbReference type="ChEBI" id="CHEBI:57930"/>
        <dbReference type="ChEBI" id="CHEBI:61557"/>
        <dbReference type="ChEBI" id="CHEBI:456216"/>
        <dbReference type="EC" id="2.7.4.6"/>
    </reaction>
</comment>
<comment type="cofactor">
    <cofactor evidence="1">
        <name>Mg(2+)</name>
        <dbReference type="ChEBI" id="CHEBI:18420"/>
    </cofactor>
</comment>
<comment type="subunit">
    <text evidence="1">Homotetramer.</text>
</comment>
<comment type="subcellular location">
    <subcellularLocation>
        <location evidence="1">Cytoplasm</location>
    </subcellularLocation>
</comment>
<comment type="similarity">
    <text evidence="1">Belongs to the NDK family.</text>
</comment>
<sequence>MAIERTLSIIKPDAVAKNVIGQIYSRFEGAGLKIVASRMAHLSRGDAEKFYAVHAARPFFKDLVDFMISGPVMIQVLEGEGAILKNRDLMGATDPKKAEKGTIRADFADSIDANAVHGSDAAETAAVEIAFFFPEMNVYSR</sequence>
<dbReference type="EC" id="2.7.4.6" evidence="1"/>
<dbReference type="EMBL" id="CP001025">
    <property type="protein sequence ID" value="ACB64211.1"/>
    <property type="molecule type" value="Genomic_DNA"/>
</dbReference>
<dbReference type="RefSeq" id="WP_006755775.1">
    <property type="nucleotide sequence ID" value="NC_010551.1"/>
</dbReference>
<dbReference type="SMR" id="B1YR47"/>
<dbReference type="GeneID" id="93086040"/>
<dbReference type="KEGG" id="bac:BamMC406_1726"/>
<dbReference type="HOGENOM" id="CLU_060216_8_1_4"/>
<dbReference type="OrthoDB" id="9801161at2"/>
<dbReference type="Proteomes" id="UP000001680">
    <property type="component" value="Chromosome 1"/>
</dbReference>
<dbReference type="GO" id="GO:0005737">
    <property type="term" value="C:cytoplasm"/>
    <property type="evidence" value="ECO:0007669"/>
    <property type="project" value="UniProtKB-SubCell"/>
</dbReference>
<dbReference type="GO" id="GO:0005524">
    <property type="term" value="F:ATP binding"/>
    <property type="evidence" value="ECO:0007669"/>
    <property type="project" value="UniProtKB-UniRule"/>
</dbReference>
<dbReference type="GO" id="GO:0046872">
    <property type="term" value="F:metal ion binding"/>
    <property type="evidence" value="ECO:0007669"/>
    <property type="project" value="UniProtKB-KW"/>
</dbReference>
<dbReference type="GO" id="GO:0004550">
    <property type="term" value="F:nucleoside diphosphate kinase activity"/>
    <property type="evidence" value="ECO:0007669"/>
    <property type="project" value="UniProtKB-UniRule"/>
</dbReference>
<dbReference type="GO" id="GO:0006241">
    <property type="term" value="P:CTP biosynthetic process"/>
    <property type="evidence" value="ECO:0007669"/>
    <property type="project" value="UniProtKB-UniRule"/>
</dbReference>
<dbReference type="GO" id="GO:0006183">
    <property type="term" value="P:GTP biosynthetic process"/>
    <property type="evidence" value="ECO:0007669"/>
    <property type="project" value="UniProtKB-UniRule"/>
</dbReference>
<dbReference type="GO" id="GO:0006228">
    <property type="term" value="P:UTP biosynthetic process"/>
    <property type="evidence" value="ECO:0007669"/>
    <property type="project" value="UniProtKB-UniRule"/>
</dbReference>
<dbReference type="CDD" id="cd04413">
    <property type="entry name" value="NDPk_I"/>
    <property type="match status" value="1"/>
</dbReference>
<dbReference type="FunFam" id="3.30.70.141:FF:000001">
    <property type="entry name" value="Nucleoside diphosphate kinase"/>
    <property type="match status" value="1"/>
</dbReference>
<dbReference type="Gene3D" id="3.30.70.141">
    <property type="entry name" value="Nucleoside diphosphate kinase-like domain"/>
    <property type="match status" value="1"/>
</dbReference>
<dbReference type="HAMAP" id="MF_00451">
    <property type="entry name" value="NDP_kinase"/>
    <property type="match status" value="1"/>
</dbReference>
<dbReference type="InterPro" id="IPR034907">
    <property type="entry name" value="NDK-like_dom"/>
</dbReference>
<dbReference type="InterPro" id="IPR036850">
    <property type="entry name" value="NDK-like_dom_sf"/>
</dbReference>
<dbReference type="InterPro" id="IPR001564">
    <property type="entry name" value="Nucleoside_diP_kinase"/>
</dbReference>
<dbReference type="NCBIfam" id="NF001908">
    <property type="entry name" value="PRK00668.1"/>
    <property type="match status" value="1"/>
</dbReference>
<dbReference type="PANTHER" id="PTHR46161">
    <property type="entry name" value="NUCLEOSIDE DIPHOSPHATE KINASE"/>
    <property type="match status" value="1"/>
</dbReference>
<dbReference type="PANTHER" id="PTHR46161:SF3">
    <property type="entry name" value="NUCLEOSIDE DIPHOSPHATE KINASE DDB_G0292928-RELATED"/>
    <property type="match status" value="1"/>
</dbReference>
<dbReference type="Pfam" id="PF00334">
    <property type="entry name" value="NDK"/>
    <property type="match status" value="1"/>
</dbReference>
<dbReference type="PRINTS" id="PR01243">
    <property type="entry name" value="NUCDPKINASE"/>
</dbReference>
<dbReference type="SMART" id="SM00562">
    <property type="entry name" value="NDK"/>
    <property type="match status" value="1"/>
</dbReference>
<dbReference type="SUPFAM" id="SSF54919">
    <property type="entry name" value="Nucleoside diphosphate kinase, NDK"/>
    <property type="match status" value="1"/>
</dbReference>
<dbReference type="PROSITE" id="PS51374">
    <property type="entry name" value="NDPK_LIKE"/>
    <property type="match status" value="1"/>
</dbReference>
<proteinExistence type="inferred from homology"/>
<reference key="1">
    <citation type="submission" date="2008-04" db="EMBL/GenBank/DDBJ databases">
        <title>Complete sequence of chromosome 1 of Burkholderia ambifaria MC40-6.</title>
        <authorList>
            <person name="Copeland A."/>
            <person name="Lucas S."/>
            <person name="Lapidus A."/>
            <person name="Glavina del Rio T."/>
            <person name="Dalin E."/>
            <person name="Tice H."/>
            <person name="Pitluck S."/>
            <person name="Chain P."/>
            <person name="Malfatti S."/>
            <person name="Shin M."/>
            <person name="Vergez L."/>
            <person name="Lang D."/>
            <person name="Schmutz J."/>
            <person name="Larimer F."/>
            <person name="Land M."/>
            <person name="Hauser L."/>
            <person name="Kyrpides N."/>
            <person name="Lykidis A."/>
            <person name="Ramette A."/>
            <person name="Konstantinidis K."/>
            <person name="Tiedje J."/>
            <person name="Richardson P."/>
        </authorList>
    </citation>
    <scope>NUCLEOTIDE SEQUENCE [LARGE SCALE GENOMIC DNA]</scope>
    <source>
        <strain>MC40-6</strain>
    </source>
</reference>
<protein>
    <recommendedName>
        <fullName evidence="1">Nucleoside diphosphate kinase</fullName>
        <shortName evidence="1">NDK</shortName>
        <shortName evidence="1">NDP kinase</shortName>
        <ecNumber evidence="1">2.7.4.6</ecNumber>
    </recommendedName>
    <alternativeName>
        <fullName evidence="1">Nucleoside-2-P kinase</fullName>
    </alternativeName>
</protein>